<keyword id="KW-0175">Coiled coil</keyword>
<keyword id="KW-0967">Endosome</keyword>
<keyword id="KW-0653">Protein transport</keyword>
<keyword id="KW-1185">Reference proteome</keyword>
<keyword id="KW-0813">Transport</keyword>
<keyword id="KW-0832">Ubl conjugation</keyword>
<comment type="function">
    <text evidence="5">Component of the ESCRT-I complex (endosomal sorting complex required for transport I), a regulator of vesicular trafficking process (PubMed:17090720). Required for the sorting of endocytic ubiquitinated cargos into multivesicular bodies (MVBs) (PubMed:17090720). May control nuclear division through the microtubule cytoskeleton (PubMed:17090720).</text>
</comment>
<comment type="subunit">
    <text evidence="5 6 7 8 9">Component of the endosomal sorting required for transport complex I (ESCRT-I), composed of ELC, VPS28 and VPS37 (PubMed:17090720). Interacts with VPS28 and VPS37 (PubMed:17090720). Binds ubiquitin in vitro (PubMed:17090720). Interacts with FREE1 (PubMed:25438943). Interacts with TOL9/TOM1D (PubMed:22639582). Interacts with BRO1/ALIX (PubMed:17090720, PubMed:22639582, PubMed:25438943, PubMed:26902184). Interacts with SINAT1, SINAT2, SINAT3 and SINAT4 (PubMed:32753431).</text>
</comment>
<comment type="interaction">
    <interactant intactId="EBI-3865248">
        <id>Q9LHG8</id>
    </interactant>
    <interactant intactId="EBI-3865255">
        <id>Q9FFY6</id>
        <label>ELCL</label>
    </interactant>
    <organismsDiffer>false</organismsDiffer>
    <experiments>4</experiments>
</comment>
<comment type="interaction">
    <interactant intactId="EBI-3865248">
        <id>Q9LHG8</id>
    </interactant>
    <interactant intactId="EBI-3865302">
        <id>Q9FF81</id>
        <label>VPS36</label>
    </interactant>
    <organismsDiffer>false</organismsDiffer>
    <experiments>3</experiments>
</comment>
<comment type="interaction">
    <interactant intactId="EBI-3865248">
        <id>Q9LHG8</id>
    </interactant>
    <interactant intactId="EBI-3865264">
        <id>Q9SCP9</id>
        <label>VPS37-1</label>
    </interactant>
    <organismsDiffer>false</organismsDiffer>
    <experiments>4</experiments>
</comment>
<comment type="subcellular location">
    <subcellularLocation>
        <location evidence="5">Early endosome</location>
    </subcellularLocation>
    <subcellularLocation>
        <location evidence="5">Late endosome</location>
    </subcellularLocation>
    <subcellularLocation>
        <location evidence="7">Prevacuolar compartment</location>
    </subcellularLocation>
</comment>
<comment type="tissue specificity">
    <text evidence="5">Expressed in roots, stems, leaves and flowers.</text>
</comment>
<comment type="PTM">
    <text evidence="9">Ubiquitinated by SINAT1, SINAT2, SINAT3 and SINAT4 for subsequent proteasomal degradation.</text>
</comment>
<comment type="disruption phenotype">
    <text evidence="5">Clustered trichomes and multinucleated cells.</text>
</comment>
<comment type="similarity">
    <text evidence="14">Belongs to the ubiquitin-conjugating enzyme family. UEV subfamily.</text>
</comment>
<gene>
    <name evidence="11" type="primary">ELC</name>
    <name evidence="11" type="synonym">ELCH</name>
    <name evidence="12 13" type="synonym">VPS23A</name>
    <name evidence="15" type="ordered locus">At3g12400</name>
    <name evidence="17" type="ORF">MQC3.22</name>
    <name evidence="16" type="ORF">T2E22.28</name>
</gene>
<sequence length="398" mass="44716">MVPPPSNPQQVQQFLSSALSQRGPSSVPYEESNKWLIRQHLLNLISSYPSLEPKTASFMHNDGRSVNLLQADGTIPMPFHGVTYNIPVIIWLLESYPRHPPCVYVNPTADMIIKRPHAHVTPSGLVSLPYLQNWVYPSSNLVDLVSDLSAAFARDPPLYSRRRPQPPPPSPPTVYDSSLSRPPSADQSLPRPFPPSPYGGGVSRVQVQHVHHQQQSDDAAEVFKRNAINKMVEMVHSDLVSMRRAREAEAEELLSLQAGLKRREDELNIGLKEMVEEKETLEQQLQIISMNTDILDSWVRENQGKTKNLVDLDVDNAFECGDTLSKQMLECTALDLAIEDAIYSLDKSFQDGVVPFDQYLRNVRLLSREQFFHRATGSKVRAAQMEVQVAAIAGRLHS</sequence>
<protein>
    <recommendedName>
        <fullName evidence="11">Protein ELC</fullName>
        <shortName evidence="11">AtELC</shortName>
    </recommendedName>
    <alternativeName>
        <fullName evidence="11">ESCRT-I complex subunit VPS23 homolog 1</fullName>
    </alternativeName>
    <alternativeName>
        <fullName evidence="13">Protein VACUOLAR PROTEIN SORTING 23A</fullName>
    </alternativeName>
    <alternativeName>
        <fullName evidence="10">Vacuolar protein-sorting-associated protein 23 homolog 1</fullName>
    </alternativeName>
</protein>
<evidence type="ECO:0000255" key="1"/>
<evidence type="ECO:0000255" key="2">
    <source>
        <dbReference type="PROSITE-ProRule" id="PRU00644"/>
    </source>
</evidence>
<evidence type="ECO:0000255" key="3">
    <source>
        <dbReference type="PROSITE-ProRule" id="PRU00652"/>
    </source>
</evidence>
<evidence type="ECO:0000256" key="4">
    <source>
        <dbReference type="SAM" id="MobiDB-lite"/>
    </source>
</evidence>
<evidence type="ECO:0000269" key="5">
    <source>
    </source>
</evidence>
<evidence type="ECO:0000269" key="6">
    <source>
    </source>
</evidence>
<evidence type="ECO:0000269" key="7">
    <source>
    </source>
</evidence>
<evidence type="ECO:0000269" key="8">
    <source>
    </source>
</evidence>
<evidence type="ECO:0000269" key="9">
    <source>
    </source>
</evidence>
<evidence type="ECO:0000303" key="10">
    <source>
    </source>
</evidence>
<evidence type="ECO:0000303" key="11">
    <source>
    </source>
</evidence>
<evidence type="ECO:0000303" key="12">
    <source>
    </source>
</evidence>
<evidence type="ECO:0000303" key="13">
    <source>
    </source>
</evidence>
<evidence type="ECO:0000305" key="14"/>
<evidence type="ECO:0000312" key="15">
    <source>
        <dbReference type="Araport" id="AT3G12400"/>
    </source>
</evidence>
<evidence type="ECO:0000312" key="16">
    <source>
        <dbReference type="EMBL" id="AAG51025.1"/>
    </source>
</evidence>
<evidence type="ECO:0000312" key="17">
    <source>
        <dbReference type="EMBL" id="BAB03147.1"/>
    </source>
</evidence>
<feature type="chain" id="PRO_0000368020" description="Protein ELC">
    <location>
        <begin position="1"/>
        <end position="398"/>
    </location>
</feature>
<feature type="domain" description="UEV" evidence="3">
    <location>
        <begin position="18"/>
        <end position="162"/>
    </location>
</feature>
<feature type="domain" description="SB" evidence="2">
    <location>
        <begin position="322"/>
        <end position="390"/>
    </location>
</feature>
<feature type="region of interest" description="Disordered" evidence="4">
    <location>
        <begin position="157"/>
        <end position="202"/>
    </location>
</feature>
<feature type="coiled-coil region" evidence="1">
    <location>
        <begin position="247"/>
        <end position="291"/>
    </location>
</feature>
<feature type="compositionally biased region" description="Polar residues" evidence="4">
    <location>
        <begin position="175"/>
        <end position="187"/>
    </location>
</feature>
<dbReference type="EMBL" id="AP002047">
    <property type="protein sequence ID" value="BAB03147.1"/>
    <property type="molecule type" value="Genomic_DNA"/>
</dbReference>
<dbReference type="EMBL" id="AC069474">
    <property type="protein sequence ID" value="AAG51025.1"/>
    <property type="molecule type" value="Genomic_DNA"/>
</dbReference>
<dbReference type="EMBL" id="CP002686">
    <property type="protein sequence ID" value="AEE75193.1"/>
    <property type="molecule type" value="Genomic_DNA"/>
</dbReference>
<dbReference type="EMBL" id="AY056283">
    <property type="protein sequence ID" value="AAL07132.1"/>
    <property type="molecule type" value="mRNA"/>
</dbReference>
<dbReference type="EMBL" id="AY133779">
    <property type="protein sequence ID" value="AAM91713.1"/>
    <property type="molecule type" value="mRNA"/>
</dbReference>
<dbReference type="EMBL" id="AY087782">
    <property type="protein sequence ID" value="AAM65318.1"/>
    <property type="molecule type" value="mRNA"/>
</dbReference>
<dbReference type="RefSeq" id="NP_566423.1">
    <property type="nucleotide sequence ID" value="NM_112075.3"/>
</dbReference>
<dbReference type="SMR" id="Q9LHG8"/>
<dbReference type="BioGRID" id="5753">
    <property type="interactions" value="15"/>
</dbReference>
<dbReference type="FunCoup" id="Q9LHG8">
    <property type="interactions" value="3633"/>
</dbReference>
<dbReference type="IntAct" id="Q9LHG8">
    <property type="interactions" value="8"/>
</dbReference>
<dbReference type="STRING" id="3702.Q9LHG8"/>
<dbReference type="TCDB" id="3.A.31.1.2">
    <property type="family name" value="the endosomal sorting complexes required for transport iii (escrt-iii) family"/>
</dbReference>
<dbReference type="GlyGen" id="Q9LHG8">
    <property type="glycosylation" value="1 site"/>
</dbReference>
<dbReference type="PaxDb" id="3702-AT3G12400.1"/>
<dbReference type="ProteomicsDB" id="220759"/>
<dbReference type="EnsemblPlants" id="AT3G12400.1">
    <property type="protein sequence ID" value="AT3G12400.1"/>
    <property type="gene ID" value="AT3G12400"/>
</dbReference>
<dbReference type="GeneID" id="820419"/>
<dbReference type="Gramene" id="AT3G12400.1">
    <property type="protein sequence ID" value="AT3G12400.1"/>
    <property type="gene ID" value="AT3G12400"/>
</dbReference>
<dbReference type="KEGG" id="ath:AT3G12400"/>
<dbReference type="Araport" id="AT3G12400"/>
<dbReference type="TAIR" id="AT3G12400">
    <property type="gene designation" value="ELC"/>
</dbReference>
<dbReference type="eggNOG" id="KOG2391">
    <property type="taxonomic scope" value="Eukaryota"/>
</dbReference>
<dbReference type="HOGENOM" id="CLU_017548_0_0_1"/>
<dbReference type="InParanoid" id="Q9LHG8"/>
<dbReference type="OrthoDB" id="306304at2759"/>
<dbReference type="PhylomeDB" id="Q9LHG8"/>
<dbReference type="PRO" id="PR:Q9LHG8"/>
<dbReference type="Proteomes" id="UP000006548">
    <property type="component" value="Chromosome 3"/>
</dbReference>
<dbReference type="ExpressionAtlas" id="Q9LHG8">
    <property type="expression patterns" value="baseline and differential"/>
</dbReference>
<dbReference type="GO" id="GO:0005769">
    <property type="term" value="C:early endosome"/>
    <property type="evidence" value="ECO:0000314"/>
    <property type="project" value="TAIR"/>
</dbReference>
<dbReference type="GO" id="GO:0000813">
    <property type="term" value="C:ESCRT I complex"/>
    <property type="evidence" value="ECO:0000250"/>
    <property type="project" value="TAIR"/>
</dbReference>
<dbReference type="GO" id="GO:0005770">
    <property type="term" value="C:late endosome"/>
    <property type="evidence" value="ECO:0000314"/>
    <property type="project" value="TAIR"/>
</dbReference>
<dbReference type="GO" id="GO:0032991">
    <property type="term" value="C:protein-containing complex"/>
    <property type="evidence" value="ECO:0000314"/>
    <property type="project" value="TAIR"/>
</dbReference>
<dbReference type="GO" id="GO:0043130">
    <property type="term" value="F:ubiquitin binding"/>
    <property type="evidence" value="ECO:0000314"/>
    <property type="project" value="TAIR"/>
</dbReference>
<dbReference type="GO" id="GO:0051301">
    <property type="term" value="P:cell division"/>
    <property type="evidence" value="ECO:0000315"/>
    <property type="project" value="TAIR"/>
</dbReference>
<dbReference type="GO" id="GO:0036211">
    <property type="term" value="P:protein modification process"/>
    <property type="evidence" value="ECO:0007669"/>
    <property type="project" value="InterPro"/>
</dbReference>
<dbReference type="GO" id="GO:0015031">
    <property type="term" value="P:protein transport"/>
    <property type="evidence" value="ECO:0007669"/>
    <property type="project" value="UniProtKB-KW"/>
</dbReference>
<dbReference type="GO" id="GO:0010091">
    <property type="term" value="P:trichome branching"/>
    <property type="evidence" value="ECO:0000315"/>
    <property type="project" value="TAIR"/>
</dbReference>
<dbReference type="CDD" id="cd11685">
    <property type="entry name" value="UEV_TSG101-like"/>
    <property type="match status" value="1"/>
</dbReference>
<dbReference type="FunFam" id="3.10.110.10:FF:000113">
    <property type="entry name" value="Protein ELC"/>
    <property type="match status" value="1"/>
</dbReference>
<dbReference type="Gene3D" id="6.10.140.820">
    <property type="match status" value="1"/>
</dbReference>
<dbReference type="Gene3D" id="3.10.110.10">
    <property type="entry name" value="Ubiquitin Conjugating Enzyme"/>
    <property type="match status" value="1"/>
</dbReference>
<dbReference type="InterPro" id="IPR052070">
    <property type="entry name" value="ESCRT-I_UEV_domain"/>
</dbReference>
<dbReference type="InterPro" id="IPR037202">
    <property type="entry name" value="ESCRT_assembly_dom"/>
</dbReference>
<dbReference type="InterPro" id="IPR017916">
    <property type="entry name" value="SB_dom"/>
</dbReference>
<dbReference type="InterPro" id="IPR016135">
    <property type="entry name" value="UBQ-conjugating_enzyme/RWD"/>
</dbReference>
<dbReference type="InterPro" id="IPR008883">
    <property type="entry name" value="UEV_N"/>
</dbReference>
<dbReference type="PANTHER" id="PTHR23306:SF22">
    <property type="entry name" value="PROTEIN ELC"/>
    <property type="match status" value="1"/>
</dbReference>
<dbReference type="PANTHER" id="PTHR23306">
    <property type="entry name" value="TUMOR SUSCEPTIBILITY GENE 101 PROTEIN-RELATED"/>
    <property type="match status" value="1"/>
</dbReference>
<dbReference type="Pfam" id="PF05743">
    <property type="entry name" value="UEV"/>
    <property type="match status" value="1"/>
</dbReference>
<dbReference type="Pfam" id="PF09454">
    <property type="entry name" value="Vps23_core"/>
    <property type="match status" value="1"/>
</dbReference>
<dbReference type="SUPFAM" id="SSF140111">
    <property type="entry name" value="Endosomal sorting complex assembly domain"/>
    <property type="match status" value="1"/>
</dbReference>
<dbReference type="SUPFAM" id="SSF54495">
    <property type="entry name" value="UBC-like"/>
    <property type="match status" value="1"/>
</dbReference>
<dbReference type="PROSITE" id="PS51312">
    <property type="entry name" value="SB"/>
    <property type="match status" value="1"/>
</dbReference>
<dbReference type="PROSITE" id="PS51322">
    <property type="entry name" value="UEV"/>
    <property type="match status" value="1"/>
</dbReference>
<organism>
    <name type="scientific">Arabidopsis thaliana</name>
    <name type="common">Mouse-ear cress</name>
    <dbReference type="NCBI Taxonomy" id="3702"/>
    <lineage>
        <taxon>Eukaryota</taxon>
        <taxon>Viridiplantae</taxon>
        <taxon>Streptophyta</taxon>
        <taxon>Embryophyta</taxon>
        <taxon>Tracheophyta</taxon>
        <taxon>Spermatophyta</taxon>
        <taxon>Magnoliopsida</taxon>
        <taxon>eudicotyledons</taxon>
        <taxon>Gunneridae</taxon>
        <taxon>Pentapetalae</taxon>
        <taxon>rosids</taxon>
        <taxon>malvids</taxon>
        <taxon>Brassicales</taxon>
        <taxon>Brassicaceae</taxon>
        <taxon>Camelineae</taxon>
        <taxon>Arabidopsis</taxon>
    </lineage>
</organism>
<name>ELC_ARATH</name>
<accession>Q9LHG8</accession>
<reference key="1">
    <citation type="journal article" date="2000" name="DNA Res.">
        <title>Structural analysis of Arabidopsis thaliana chromosome 3. II. Sequence features of the 4,251,695 bp regions covered by 90 P1, TAC and BAC clones.</title>
        <authorList>
            <person name="Kaneko T."/>
            <person name="Katoh T."/>
            <person name="Sato S."/>
            <person name="Nakamura Y."/>
            <person name="Asamizu E."/>
            <person name="Tabata S."/>
        </authorList>
    </citation>
    <scope>NUCLEOTIDE SEQUENCE [LARGE SCALE GENOMIC DNA]</scope>
    <source>
        <strain>cv. Columbia</strain>
    </source>
</reference>
<reference key="2">
    <citation type="journal article" date="2000" name="Nature">
        <title>Sequence and analysis of chromosome 3 of the plant Arabidopsis thaliana.</title>
        <authorList>
            <person name="Salanoubat M."/>
            <person name="Lemcke K."/>
            <person name="Rieger M."/>
            <person name="Ansorge W."/>
            <person name="Unseld M."/>
            <person name="Fartmann B."/>
            <person name="Valle G."/>
            <person name="Bloecker H."/>
            <person name="Perez-Alonso M."/>
            <person name="Obermaier B."/>
            <person name="Delseny M."/>
            <person name="Boutry M."/>
            <person name="Grivell L.A."/>
            <person name="Mache R."/>
            <person name="Puigdomenech P."/>
            <person name="De Simone V."/>
            <person name="Choisne N."/>
            <person name="Artiguenave F."/>
            <person name="Robert C."/>
            <person name="Brottier P."/>
            <person name="Wincker P."/>
            <person name="Cattolico L."/>
            <person name="Weissenbach J."/>
            <person name="Saurin W."/>
            <person name="Quetier F."/>
            <person name="Schaefer M."/>
            <person name="Mueller-Auer S."/>
            <person name="Gabel C."/>
            <person name="Fuchs M."/>
            <person name="Benes V."/>
            <person name="Wurmbach E."/>
            <person name="Drzonek H."/>
            <person name="Erfle H."/>
            <person name="Jordan N."/>
            <person name="Bangert S."/>
            <person name="Wiedelmann R."/>
            <person name="Kranz H."/>
            <person name="Voss H."/>
            <person name="Holland R."/>
            <person name="Brandt P."/>
            <person name="Nyakatura G."/>
            <person name="Vezzi A."/>
            <person name="D'Angelo M."/>
            <person name="Pallavicini A."/>
            <person name="Toppo S."/>
            <person name="Simionati B."/>
            <person name="Conrad A."/>
            <person name="Hornischer K."/>
            <person name="Kauer G."/>
            <person name="Loehnert T.-H."/>
            <person name="Nordsiek G."/>
            <person name="Reichelt J."/>
            <person name="Scharfe M."/>
            <person name="Schoen O."/>
            <person name="Bargues M."/>
            <person name="Terol J."/>
            <person name="Climent J."/>
            <person name="Navarro P."/>
            <person name="Collado C."/>
            <person name="Perez-Perez A."/>
            <person name="Ottenwaelder B."/>
            <person name="Duchemin D."/>
            <person name="Cooke R."/>
            <person name="Laudie M."/>
            <person name="Berger-Llauro C."/>
            <person name="Purnelle B."/>
            <person name="Masuy D."/>
            <person name="de Haan M."/>
            <person name="Maarse A.C."/>
            <person name="Alcaraz J.-P."/>
            <person name="Cottet A."/>
            <person name="Casacuberta E."/>
            <person name="Monfort A."/>
            <person name="Argiriou A."/>
            <person name="Flores M."/>
            <person name="Liguori R."/>
            <person name="Vitale D."/>
            <person name="Mannhaupt G."/>
            <person name="Haase D."/>
            <person name="Schoof H."/>
            <person name="Rudd S."/>
            <person name="Zaccaria P."/>
            <person name="Mewes H.-W."/>
            <person name="Mayer K.F.X."/>
            <person name="Kaul S."/>
            <person name="Town C.D."/>
            <person name="Koo H.L."/>
            <person name="Tallon L.J."/>
            <person name="Jenkins J."/>
            <person name="Rooney T."/>
            <person name="Rizzo M."/>
            <person name="Walts A."/>
            <person name="Utterback T."/>
            <person name="Fujii C.Y."/>
            <person name="Shea T.P."/>
            <person name="Creasy T.H."/>
            <person name="Haas B."/>
            <person name="Maiti R."/>
            <person name="Wu D."/>
            <person name="Peterson J."/>
            <person name="Van Aken S."/>
            <person name="Pai G."/>
            <person name="Militscher J."/>
            <person name="Sellers P."/>
            <person name="Gill J.E."/>
            <person name="Feldblyum T.V."/>
            <person name="Preuss D."/>
            <person name="Lin X."/>
            <person name="Nierman W.C."/>
            <person name="Salzberg S.L."/>
            <person name="White O."/>
            <person name="Venter J.C."/>
            <person name="Fraser C.M."/>
            <person name="Kaneko T."/>
            <person name="Nakamura Y."/>
            <person name="Sato S."/>
            <person name="Kato T."/>
            <person name="Asamizu E."/>
            <person name="Sasamoto S."/>
            <person name="Kimura T."/>
            <person name="Idesawa K."/>
            <person name="Kawashima K."/>
            <person name="Kishida Y."/>
            <person name="Kiyokawa C."/>
            <person name="Kohara M."/>
            <person name="Matsumoto M."/>
            <person name="Matsuno A."/>
            <person name="Muraki A."/>
            <person name="Nakayama S."/>
            <person name="Nakazaki N."/>
            <person name="Shinpo S."/>
            <person name="Takeuchi C."/>
            <person name="Wada T."/>
            <person name="Watanabe A."/>
            <person name="Yamada M."/>
            <person name="Yasuda M."/>
            <person name="Tabata S."/>
        </authorList>
    </citation>
    <scope>NUCLEOTIDE SEQUENCE [LARGE SCALE GENOMIC DNA]</scope>
    <source>
        <strain>cv. Columbia</strain>
    </source>
</reference>
<reference key="3">
    <citation type="journal article" date="2017" name="Plant J.">
        <title>Araport11: a complete reannotation of the Arabidopsis thaliana reference genome.</title>
        <authorList>
            <person name="Cheng C.Y."/>
            <person name="Krishnakumar V."/>
            <person name="Chan A.P."/>
            <person name="Thibaud-Nissen F."/>
            <person name="Schobel S."/>
            <person name="Town C.D."/>
        </authorList>
    </citation>
    <scope>GENOME REANNOTATION</scope>
    <source>
        <strain>cv. Columbia</strain>
    </source>
</reference>
<reference key="4">
    <citation type="journal article" date="2003" name="Science">
        <title>Empirical analysis of transcriptional activity in the Arabidopsis genome.</title>
        <authorList>
            <person name="Yamada K."/>
            <person name="Lim J."/>
            <person name="Dale J.M."/>
            <person name="Chen H."/>
            <person name="Shinn P."/>
            <person name="Palm C.J."/>
            <person name="Southwick A.M."/>
            <person name="Wu H.C."/>
            <person name="Kim C.J."/>
            <person name="Nguyen M."/>
            <person name="Pham P.K."/>
            <person name="Cheuk R.F."/>
            <person name="Karlin-Newmann G."/>
            <person name="Liu S.X."/>
            <person name="Lam B."/>
            <person name="Sakano H."/>
            <person name="Wu T."/>
            <person name="Yu G."/>
            <person name="Miranda M."/>
            <person name="Quach H.L."/>
            <person name="Tripp M."/>
            <person name="Chang C.H."/>
            <person name="Lee J.M."/>
            <person name="Toriumi M.J."/>
            <person name="Chan M.M."/>
            <person name="Tang C.C."/>
            <person name="Onodera C.S."/>
            <person name="Deng J.M."/>
            <person name="Akiyama K."/>
            <person name="Ansari Y."/>
            <person name="Arakawa T."/>
            <person name="Banh J."/>
            <person name="Banno F."/>
            <person name="Bowser L."/>
            <person name="Brooks S.Y."/>
            <person name="Carninci P."/>
            <person name="Chao Q."/>
            <person name="Choy N."/>
            <person name="Enju A."/>
            <person name="Goldsmith A.D."/>
            <person name="Gurjal M."/>
            <person name="Hansen N.F."/>
            <person name="Hayashizaki Y."/>
            <person name="Johnson-Hopson C."/>
            <person name="Hsuan V.W."/>
            <person name="Iida K."/>
            <person name="Karnes M."/>
            <person name="Khan S."/>
            <person name="Koesema E."/>
            <person name="Ishida J."/>
            <person name="Jiang P.X."/>
            <person name="Jones T."/>
            <person name="Kawai J."/>
            <person name="Kamiya A."/>
            <person name="Meyers C."/>
            <person name="Nakajima M."/>
            <person name="Narusaka M."/>
            <person name="Seki M."/>
            <person name="Sakurai T."/>
            <person name="Satou M."/>
            <person name="Tamse R."/>
            <person name="Vaysberg M."/>
            <person name="Wallender E.K."/>
            <person name="Wong C."/>
            <person name="Yamamura Y."/>
            <person name="Yuan S."/>
            <person name="Shinozaki K."/>
            <person name="Davis R.W."/>
            <person name="Theologis A."/>
            <person name="Ecker J.R."/>
        </authorList>
    </citation>
    <scope>NUCLEOTIDE SEQUENCE [LARGE SCALE MRNA]</scope>
    <source>
        <strain>cv. Columbia</strain>
    </source>
</reference>
<reference key="5">
    <citation type="submission" date="2002-03" db="EMBL/GenBank/DDBJ databases">
        <title>Full-length cDNA from Arabidopsis thaliana.</title>
        <authorList>
            <person name="Brover V.V."/>
            <person name="Troukhan M.E."/>
            <person name="Alexandrov N.A."/>
            <person name="Lu Y.-P."/>
            <person name="Flavell R.B."/>
            <person name="Feldmann K.A."/>
        </authorList>
    </citation>
    <scope>NUCLEOTIDE SEQUENCE [LARGE SCALE MRNA]</scope>
</reference>
<reference key="6">
    <citation type="journal article" date="2006" name="Development">
        <title>The Arabidopsis elch mutant reveals functions of an ESCRT component in cytokinesis.</title>
        <authorList>
            <person name="Spitzer C."/>
            <person name="Schellmann S."/>
            <person name="Sabovljevic A."/>
            <person name="Shahriari M."/>
            <person name="Keshavaiah C."/>
            <person name="Bechtold N."/>
            <person name="Herzog M."/>
            <person name="Mueller S."/>
            <person name="Hanisch F.-G."/>
            <person name="Huelskamp M."/>
        </authorList>
    </citation>
    <scope>FUNCTION</scope>
    <scope>TISSUE SPECIFICITY</scope>
    <scope>INTERACTION WITH VPS28; VPS37 AND UBIQUITIN</scope>
    <scope>DISRUPTION PHENOTYPE</scope>
    <scope>NOMENCLATURE</scope>
    <scope>SUBCELLULAR LOCATION</scope>
</reference>
<reference key="7">
    <citation type="journal article" date="2006" name="Trends Plant Sci.">
        <title>Exploring the ESCRTing machinery in eukaryotes.</title>
        <authorList>
            <person name="Winter V."/>
            <person name="Hauser M.-T."/>
        </authorList>
    </citation>
    <scope>IDENTIFICATION</scope>
</reference>
<reference key="8">
    <citation type="journal article" date="2011" name="Front. Plant Sci.">
        <title>Protein-protein interaction network and subcellular localization of the Arabidopsis thaliana ESCRT machinery.</title>
        <authorList>
            <person name="Richardson L.G."/>
            <person name="Howard A.S."/>
            <person name="Khuu N."/>
            <person name="Gidda S.K."/>
            <person name="McCartney A."/>
            <person name="Morphy B.J."/>
            <person name="Mullen R.T."/>
        </authorList>
    </citation>
    <scope>INTERACTION WITH TOL9</scope>
</reference>
<reference key="9">
    <citation type="journal article" date="2014" name="Curr. Biol.">
        <title>A unique plant ESCRT component, FREE1, regulates multivesicular body protein sorting and plant growth.</title>
        <authorList>
            <person name="Gao C."/>
            <person name="Luo M."/>
            <person name="Zhao Q."/>
            <person name="Yang R."/>
            <person name="Cui Y."/>
            <person name="Zeng Y."/>
            <person name="Xia J."/>
            <person name="Jiang L."/>
        </authorList>
    </citation>
    <scope>INTERACTION WITH FREE1</scope>
    <scope>SUBCELLULAR LOCATION</scope>
</reference>
<reference key="10">
    <citation type="journal article" date="2016" name="Mol. Plant">
        <title>AtBRO1 functions in ESCRT-I complex to regulate multivesicular body protein sorting.</title>
        <authorList>
            <person name="Shen J."/>
            <person name="Gao C."/>
            <person name="Zhao Q."/>
            <person name="Lin Y."/>
            <person name="Wang X."/>
            <person name="Zhuang X."/>
            <person name="Jiang L."/>
        </authorList>
    </citation>
    <scope>INTERACTION WITH BRO1</scope>
</reference>
<reference key="11">
    <citation type="journal article" date="2020" name="Plant Cell">
        <title>SINAT E3 ubiquitin ligases mediate FREE1 and VPS23A degradation to modulate abscisic acid signaling.</title>
        <authorList>
            <person name="Xia F.N."/>
            <person name="Zeng B."/>
            <person name="Liu H.S."/>
            <person name="Qi H."/>
            <person name="Xie L.J."/>
            <person name="Yu L.J."/>
            <person name="Chen Q.F."/>
            <person name="Li J.F."/>
            <person name="Chen Y.Q."/>
            <person name="Jiang L."/>
            <person name="Xiao S."/>
        </authorList>
    </citation>
    <scope>INTERACTION WITH SINAT1; SINAT2; SINAT3 AND SINAT4</scope>
    <scope>UBIQUITINATION</scope>
</reference>
<proteinExistence type="evidence at protein level"/>